<dbReference type="EC" id="1.1.1.267" evidence="1"/>
<dbReference type="EMBL" id="CP000312">
    <property type="protein sequence ID" value="ABG86118.1"/>
    <property type="molecule type" value="Genomic_DNA"/>
</dbReference>
<dbReference type="RefSeq" id="WP_011592596.1">
    <property type="nucleotide sequence ID" value="NC_008262.1"/>
</dbReference>
<dbReference type="SMR" id="Q0SSC6"/>
<dbReference type="KEGG" id="cpr:CPR_1666"/>
<dbReference type="UniPathway" id="UPA00056">
    <property type="reaction ID" value="UER00092"/>
</dbReference>
<dbReference type="Proteomes" id="UP000001824">
    <property type="component" value="Chromosome"/>
</dbReference>
<dbReference type="GO" id="GO:0030604">
    <property type="term" value="F:1-deoxy-D-xylulose-5-phosphate reductoisomerase activity"/>
    <property type="evidence" value="ECO:0007669"/>
    <property type="project" value="UniProtKB-UniRule"/>
</dbReference>
<dbReference type="GO" id="GO:0030145">
    <property type="term" value="F:manganese ion binding"/>
    <property type="evidence" value="ECO:0007669"/>
    <property type="project" value="TreeGrafter"/>
</dbReference>
<dbReference type="GO" id="GO:0070402">
    <property type="term" value="F:NADPH binding"/>
    <property type="evidence" value="ECO:0007669"/>
    <property type="project" value="InterPro"/>
</dbReference>
<dbReference type="GO" id="GO:0051484">
    <property type="term" value="P:isopentenyl diphosphate biosynthetic process, methylerythritol 4-phosphate pathway involved in terpenoid biosynthetic process"/>
    <property type="evidence" value="ECO:0007669"/>
    <property type="project" value="TreeGrafter"/>
</dbReference>
<dbReference type="FunFam" id="3.40.50.720:FF:000045">
    <property type="entry name" value="1-deoxy-D-xylulose 5-phosphate reductoisomerase"/>
    <property type="match status" value="1"/>
</dbReference>
<dbReference type="Gene3D" id="1.10.1740.10">
    <property type="match status" value="1"/>
</dbReference>
<dbReference type="Gene3D" id="3.40.50.720">
    <property type="entry name" value="NAD(P)-binding Rossmann-like Domain"/>
    <property type="match status" value="1"/>
</dbReference>
<dbReference type="HAMAP" id="MF_00183">
    <property type="entry name" value="DXP_reductoisom"/>
    <property type="match status" value="1"/>
</dbReference>
<dbReference type="InterPro" id="IPR003821">
    <property type="entry name" value="DXP_reductoisomerase"/>
</dbReference>
<dbReference type="InterPro" id="IPR013644">
    <property type="entry name" value="DXP_reductoisomerase_C"/>
</dbReference>
<dbReference type="InterPro" id="IPR013512">
    <property type="entry name" value="DXP_reductoisomerase_N"/>
</dbReference>
<dbReference type="InterPro" id="IPR026877">
    <property type="entry name" value="DXPR_C"/>
</dbReference>
<dbReference type="InterPro" id="IPR036169">
    <property type="entry name" value="DXPR_C_sf"/>
</dbReference>
<dbReference type="InterPro" id="IPR036291">
    <property type="entry name" value="NAD(P)-bd_dom_sf"/>
</dbReference>
<dbReference type="NCBIfam" id="TIGR00243">
    <property type="entry name" value="Dxr"/>
    <property type="match status" value="1"/>
</dbReference>
<dbReference type="NCBIfam" id="NF009114">
    <property type="entry name" value="PRK12464.1"/>
    <property type="match status" value="1"/>
</dbReference>
<dbReference type="PANTHER" id="PTHR30525">
    <property type="entry name" value="1-DEOXY-D-XYLULOSE 5-PHOSPHATE REDUCTOISOMERASE"/>
    <property type="match status" value="1"/>
</dbReference>
<dbReference type="PANTHER" id="PTHR30525:SF0">
    <property type="entry name" value="1-DEOXY-D-XYLULOSE 5-PHOSPHATE REDUCTOISOMERASE, CHLOROPLASTIC"/>
    <property type="match status" value="1"/>
</dbReference>
<dbReference type="Pfam" id="PF08436">
    <property type="entry name" value="DXP_redisom_C"/>
    <property type="match status" value="1"/>
</dbReference>
<dbReference type="Pfam" id="PF02670">
    <property type="entry name" value="DXP_reductoisom"/>
    <property type="match status" value="1"/>
</dbReference>
<dbReference type="Pfam" id="PF13288">
    <property type="entry name" value="DXPR_C"/>
    <property type="match status" value="1"/>
</dbReference>
<dbReference type="PIRSF" id="PIRSF006205">
    <property type="entry name" value="Dxp_reductismrs"/>
    <property type="match status" value="1"/>
</dbReference>
<dbReference type="SUPFAM" id="SSF69055">
    <property type="entry name" value="1-deoxy-D-xylulose-5-phosphate reductoisomerase, C-terminal domain"/>
    <property type="match status" value="1"/>
</dbReference>
<dbReference type="SUPFAM" id="SSF55347">
    <property type="entry name" value="Glyceraldehyde-3-phosphate dehydrogenase-like, C-terminal domain"/>
    <property type="match status" value="1"/>
</dbReference>
<dbReference type="SUPFAM" id="SSF51735">
    <property type="entry name" value="NAD(P)-binding Rossmann-fold domains"/>
    <property type="match status" value="1"/>
</dbReference>
<evidence type="ECO:0000255" key="1">
    <source>
        <dbReference type="HAMAP-Rule" id="MF_00183"/>
    </source>
</evidence>
<gene>
    <name evidence="1" type="primary">dxr</name>
    <name type="ordered locus">CPR_1666</name>
</gene>
<sequence length="384" mass="43222">MKRISILGVTGSIGTQTLDVLRFHKEDFELVGITANRNIELTMDIIKEFSPKYVAINHEESYKKLVDLVKSEGLKCEVIYGMEGLVKVATLDEIDIVVTSVVGMIGLKPTVEAIRKGKNIALANKETLVVAGELVMREAKENGVKILAVDSEHSAIFQSLQGNAHNKIDKILLTASGGPFRGFTIKDLKSVTPERALKHPKWNMGQKISIDSSTLMNKGLEVIEAHWLFDCPYKDIEVVVHPQSIIHSMVQYTDGAVIAQLGVPDMKLPIQYALNYPNREGNISEKLDLFKIRELTFEKPDLDTFKCLKLAYEAGEKGKLMPTILNGANEVCVELFLNKKITYLQIPEIIEECMNTFDYNKEVTLDNVINLDKEVRQYIYEKYN</sequence>
<name>DXR_CLOPS</name>
<reference key="1">
    <citation type="journal article" date="2006" name="Genome Res.">
        <title>Skewed genomic variability in strains of the toxigenic bacterial pathogen, Clostridium perfringens.</title>
        <authorList>
            <person name="Myers G.S.A."/>
            <person name="Rasko D.A."/>
            <person name="Cheung J.K."/>
            <person name="Ravel J."/>
            <person name="Seshadri R."/>
            <person name="DeBoy R.T."/>
            <person name="Ren Q."/>
            <person name="Varga J."/>
            <person name="Awad M.M."/>
            <person name="Brinkac L.M."/>
            <person name="Daugherty S.C."/>
            <person name="Haft D.H."/>
            <person name="Dodson R.J."/>
            <person name="Madupu R."/>
            <person name="Nelson W.C."/>
            <person name="Rosovitz M.J."/>
            <person name="Sullivan S.A."/>
            <person name="Khouri H."/>
            <person name="Dimitrov G.I."/>
            <person name="Watkins K.L."/>
            <person name="Mulligan S."/>
            <person name="Benton J."/>
            <person name="Radune D."/>
            <person name="Fisher D.J."/>
            <person name="Atkins H.S."/>
            <person name="Hiscox T."/>
            <person name="Jost B.H."/>
            <person name="Billington S.J."/>
            <person name="Songer J.G."/>
            <person name="McClane B.A."/>
            <person name="Titball R.W."/>
            <person name="Rood J.I."/>
            <person name="Melville S.B."/>
            <person name="Paulsen I.T."/>
        </authorList>
    </citation>
    <scope>NUCLEOTIDE SEQUENCE [LARGE SCALE GENOMIC DNA]</scope>
    <source>
        <strain>SM101 / Type A</strain>
    </source>
</reference>
<feature type="chain" id="PRO_1000020252" description="1-deoxy-D-xylulose 5-phosphate reductoisomerase">
    <location>
        <begin position="1"/>
        <end position="384"/>
    </location>
</feature>
<feature type="binding site" evidence="1">
    <location>
        <position position="10"/>
    </location>
    <ligand>
        <name>NADPH</name>
        <dbReference type="ChEBI" id="CHEBI:57783"/>
    </ligand>
</feature>
<feature type="binding site" evidence="1">
    <location>
        <position position="11"/>
    </location>
    <ligand>
        <name>NADPH</name>
        <dbReference type="ChEBI" id="CHEBI:57783"/>
    </ligand>
</feature>
<feature type="binding site" evidence="1">
    <location>
        <position position="12"/>
    </location>
    <ligand>
        <name>NADPH</name>
        <dbReference type="ChEBI" id="CHEBI:57783"/>
    </ligand>
</feature>
<feature type="binding site" evidence="1">
    <location>
        <position position="13"/>
    </location>
    <ligand>
        <name>NADPH</name>
        <dbReference type="ChEBI" id="CHEBI:57783"/>
    </ligand>
</feature>
<feature type="binding site" evidence="1">
    <location>
        <position position="37"/>
    </location>
    <ligand>
        <name>NADPH</name>
        <dbReference type="ChEBI" id="CHEBI:57783"/>
    </ligand>
</feature>
<feature type="binding site" evidence="1">
    <location>
        <position position="38"/>
    </location>
    <ligand>
        <name>NADPH</name>
        <dbReference type="ChEBI" id="CHEBI:57783"/>
    </ligand>
</feature>
<feature type="binding site" evidence="1">
    <location>
        <position position="124"/>
    </location>
    <ligand>
        <name>NADPH</name>
        <dbReference type="ChEBI" id="CHEBI:57783"/>
    </ligand>
</feature>
<feature type="binding site" evidence="1">
    <location>
        <position position="125"/>
    </location>
    <ligand>
        <name>1-deoxy-D-xylulose 5-phosphate</name>
        <dbReference type="ChEBI" id="CHEBI:57792"/>
    </ligand>
</feature>
<feature type="binding site" evidence="1">
    <location>
        <position position="126"/>
    </location>
    <ligand>
        <name>NADPH</name>
        <dbReference type="ChEBI" id="CHEBI:57783"/>
    </ligand>
</feature>
<feature type="binding site" evidence="1">
    <location>
        <position position="150"/>
    </location>
    <ligand>
        <name>Mn(2+)</name>
        <dbReference type="ChEBI" id="CHEBI:29035"/>
    </ligand>
</feature>
<feature type="binding site" evidence="1">
    <location>
        <position position="151"/>
    </location>
    <ligand>
        <name>1-deoxy-D-xylulose 5-phosphate</name>
        <dbReference type="ChEBI" id="CHEBI:57792"/>
    </ligand>
</feature>
<feature type="binding site" evidence="1">
    <location>
        <position position="152"/>
    </location>
    <ligand>
        <name>1-deoxy-D-xylulose 5-phosphate</name>
        <dbReference type="ChEBI" id="CHEBI:57792"/>
    </ligand>
</feature>
<feature type="binding site" evidence="1">
    <location>
        <position position="152"/>
    </location>
    <ligand>
        <name>Mn(2+)</name>
        <dbReference type="ChEBI" id="CHEBI:29035"/>
    </ligand>
</feature>
<feature type="binding site" evidence="1">
    <location>
        <position position="176"/>
    </location>
    <ligand>
        <name>1-deoxy-D-xylulose 5-phosphate</name>
        <dbReference type="ChEBI" id="CHEBI:57792"/>
    </ligand>
</feature>
<feature type="binding site" evidence="1">
    <location>
        <position position="199"/>
    </location>
    <ligand>
        <name>1-deoxy-D-xylulose 5-phosphate</name>
        <dbReference type="ChEBI" id="CHEBI:57792"/>
    </ligand>
</feature>
<feature type="binding site" evidence="1">
    <location>
        <position position="205"/>
    </location>
    <ligand>
        <name>NADPH</name>
        <dbReference type="ChEBI" id="CHEBI:57783"/>
    </ligand>
</feature>
<feature type="binding site" evidence="1">
    <location>
        <position position="212"/>
    </location>
    <ligand>
        <name>1-deoxy-D-xylulose 5-phosphate</name>
        <dbReference type="ChEBI" id="CHEBI:57792"/>
    </ligand>
</feature>
<feature type="binding site" evidence="1">
    <location>
        <position position="217"/>
    </location>
    <ligand>
        <name>1-deoxy-D-xylulose 5-phosphate</name>
        <dbReference type="ChEBI" id="CHEBI:57792"/>
    </ligand>
</feature>
<feature type="binding site" evidence="1">
    <location>
        <position position="218"/>
    </location>
    <ligand>
        <name>1-deoxy-D-xylulose 5-phosphate</name>
        <dbReference type="ChEBI" id="CHEBI:57792"/>
    </ligand>
</feature>
<feature type="binding site" evidence="1">
    <location>
        <position position="221"/>
    </location>
    <ligand>
        <name>1-deoxy-D-xylulose 5-phosphate</name>
        <dbReference type="ChEBI" id="CHEBI:57792"/>
    </ligand>
</feature>
<feature type="binding site" evidence="1">
    <location>
        <position position="221"/>
    </location>
    <ligand>
        <name>Mn(2+)</name>
        <dbReference type="ChEBI" id="CHEBI:29035"/>
    </ligand>
</feature>
<organism>
    <name type="scientific">Clostridium perfringens (strain SM101 / Type A)</name>
    <dbReference type="NCBI Taxonomy" id="289380"/>
    <lineage>
        <taxon>Bacteria</taxon>
        <taxon>Bacillati</taxon>
        <taxon>Bacillota</taxon>
        <taxon>Clostridia</taxon>
        <taxon>Eubacteriales</taxon>
        <taxon>Clostridiaceae</taxon>
        <taxon>Clostridium</taxon>
    </lineage>
</organism>
<proteinExistence type="inferred from homology"/>
<keyword id="KW-0414">Isoprene biosynthesis</keyword>
<keyword id="KW-0464">Manganese</keyword>
<keyword id="KW-0479">Metal-binding</keyword>
<keyword id="KW-0521">NADP</keyword>
<keyword id="KW-0560">Oxidoreductase</keyword>
<protein>
    <recommendedName>
        <fullName evidence="1">1-deoxy-D-xylulose 5-phosphate reductoisomerase</fullName>
        <shortName evidence="1">DXP reductoisomerase</shortName>
        <ecNumber evidence="1">1.1.1.267</ecNumber>
    </recommendedName>
    <alternativeName>
        <fullName evidence="1">1-deoxyxylulose-5-phosphate reductoisomerase</fullName>
    </alternativeName>
    <alternativeName>
        <fullName evidence="1">2-C-methyl-D-erythritol 4-phosphate synthase</fullName>
    </alternativeName>
</protein>
<accession>Q0SSC6</accession>
<comment type="function">
    <text evidence="1">Catalyzes the NADPH-dependent rearrangement and reduction of 1-deoxy-D-xylulose-5-phosphate (DXP) to 2-C-methyl-D-erythritol 4-phosphate (MEP).</text>
</comment>
<comment type="catalytic activity">
    <reaction evidence="1">
        <text>2-C-methyl-D-erythritol 4-phosphate + NADP(+) = 1-deoxy-D-xylulose 5-phosphate + NADPH + H(+)</text>
        <dbReference type="Rhea" id="RHEA:13717"/>
        <dbReference type="ChEBI" id="CHEBI:15378"/>
        <dbReference type="ChEBI" id="CHEBI:57783"/>
        <dbReference type="ChEBI" id="CHEBI:57792"/>
        <dbReference type="ChEBI" id="CHEBI:58262"/>
        <dbReference type="ChEBI" id="CHEBI:58349"/>
        <dbReference type="EC" id="1.1.1.267"/>
    </reaction>
    <physiologicalReaction direction="right-to-left" evidence="1">
        <dbReference type="Rhea" id="RHEA:13719"/>
    </physiologicalReaction>
</comment>
<comment type="cofactor">
    <cofactor evidence="1">
        <name>Mg(2+)</name>
        <dbReference type="ChEBI" id="CHEBI:18420"/>
    </cofactor>
    <cofactor evidence="1">
        <name>Mn(2+)</name>
        <dbReference type="ChEBI" id="CHEBI:29035"/>
    </cofactor>
</comment>
<comment type="pathway">
    <text evidence="1">Isoprenoid biosynthesis; isopentenyl diphosphate biosynthesis via DXP pathway; isopentenyl diphosphate from 1-deoxy-D-xylulose 5-phosphate: step 1/6.</text>
</comment>
<comment type="similarity">
    <text evidence="1">Belongs to the DXR family.</text>
</comment>